<reference key="1">
    <citation type="journal article" date="1990" name="J. Gen. Microbiol.">
        <title>Cloning and characterization of the gene for the '19 kDa' antigen of Mycobacterium bovis.</title>
        <authorList>
            <person name="Collins M."/>
            <person name="Patki A."/>
            <person name="Wall S."/>
            <person name="Nolan A."/>
            <person name="Goodger J."/>
            <person name="Woodward M."/>
            <person name="Dale J."/>
        </authorList>
    </citation>
    <scope>NUCLEOTIDE SEQUENCE [GENOMIC DNA]</scope>
    <source>
        <strain>Isolate 381/79</strain>
    </source>
</reference>
<reference key="2">
    <citation type="journal article" date="2003" name="Proc. Natl. Acad. Sci. U.S.A.">
        <title>The complete genome sequence of Mycobacterium bovis.</title>
        <authorList>
            <person name="Garnier T."/>
            <person name="Eiglmeier K."/>
            <person name="Camus J.-C."/>
            <person name="Medina N."/>
            <person name="Mansoor H."/>
            <person name="Pryor M."/>
            <person name="Duthoy S."/>
            <person name="Grondin S."/>
            <person name="Lacroix C."/>
            <person name="Monsempe C."/>
            <person name="Simon S."/>
            <person name="Harris B."/>
            <person name="Atkin R."/>
            <person name="Doggett J."/>
            <person name="Mayes R."/>
            <person name="Keating L."/>
            <person name="Wheeler P.R."/>
            <person name="Parkhill J."/>
            <person name="Barrell B.G."/>
            <person name="Cole S.T."/>
            <person name="Gordon S.V."/>
            <person name="Hewinson R.G."/>
        </authorList>
    </citation>
    <scope>NUCLEOTIDE SEQUENCE [LARGE SCALE GENOMIC DNA]</scope>
    <source>
        <strain>ATCC BAA-935 / AF2122/97</strain>
    </source>
</reference>
<reference key="3">
    <citation type="journal article" date="2017" name="Genome Announc.">
        <title>Updated reference genome sequence and annotation of Mycobacterium bovis AF2122/97.</title>
        <authorList>
            <person name="Malone K.M."/>
            <person name="Farrell D."/>
            <person name="Stuber T.P."/>
            <person name="Schubert O.T."/>
            <person name="Aebersold R."/>
            <person name="Robbe-Austerman S."/>
            <person name="Gordon S.V."/>
        </authorList>
    </citation>
    <scope>NUCLEOTIDE SEQUENCE [LARGE SCALE GENOMIC DNA]</scope>
    <scope>GENOME REANNOTATION</scope>
    <source>
        <strain>ATCC BAA-935 / AF2122/97</strain>
    </source>
</reference>
<accession>P0A5J1</accession>
<accession>A0A1R3Y556</accession>
<accession>P11572</accession>
<accession>X2BQ19</accession>
<keyword id="KW-1003">Cell membrane</keyword>
<keyword id="KW-0449">Lipoprotein</keyword>
<keyword id="KW-0472">Membrane</keyword>
<keyword id="KW-0564">Palmitate</keyword>
<keyword id="KW-1185">Reference proteome</keyword>
<keyword id="KW-0732">Signal</keyword>
<keyword id="KW-0813">Transport</keyword>
<keyword id="KW-0843">Virulence</keyword>
<protein>
    <recommendedName>
        <fullName>Lipoprotein LpqH</fullName>
    </recommendedName>
    <alternativeName>
        <fullName>19 kDa lipoprotein antigen</fullName>
    </alternativeName>
    <alternativeName>
        <fullName>Putative transporter LpqH</fullName>
    </alternativeName>
</protein>
<proteinExistence type="inferred from homology"/>
<evidence type="ECO:0000250" key="1">
    <source>
        <dbReference type="UniProtKB" id="P9WK61"/>
    </source>
</evidence>
<evidence type="ECO:0000256" key="2">
    <source>
        <dbReference type="SAM" id="MobiDB-lite"/>
    </source>
</evidence>
<evidence type="ECO:0000305" key="3"/>
<organism>
    <name type="scientific">Mycobacterium bovis (strain ATCC BAA-935 / AF2122/97)</name>
    <dbReference type="NCBI Taxonomy" id="233413"/>
    <lineage>
        <taxon>Bacteria</taxon>
        <taxon>Bacillati</taxon>
        <taxon>Actinomycetota</taxon>
        <taxon>Actinomycetes</taxon>
        <taxon>Mycobacteriales</taxon>
        <taxon>Mycobacteriaceae</taxon>
        <taxon>Mycobacterium</taxon>
        <taxon>Mycobacterium tuberculosis complex</taxon>
    </lineage>
</organism>
<comment type="function">
    <text evidence="1">Might be involved in ligand transport. A host TLR2 agonist, modifies host gene expression in response to pathogen.</text>
</comment>
<comment type="subcellular location">
    <subcellularLocation>
        <location evidence="3">Cell membrane</location>
        <topology evidence="3">Lipid-anchor</topology>
    </subcellularLocation>
</comment>
<comment type="domain">
    <text evidence="1">Forms a U-shaped beta-half-barrel with a large hydrophobic cavity.</text>
</comment>
<comment type="PTM">
    <text evidence="1">Modified by Lgt on Cys-22 with an S-linked diacylglycerol with a mixture of C16, C18 and C19 fatty acids, signal peptide is removed by LspA, modifed by Lnt with an amide-linked mixture of C16 and C19 fatty acids.</text>
</comment>
<comment type="similarity">
    <text evidence="3">Belongs to the mycobacterial 19 kDa antigen family.</text>
</comment>
<feature type="signal peptide" evidence="3">
    <location>
        <begin position="1"/>
        <end position="21"/>
    </location>
</feature>
<feature type="chain" id="PRO_0000018126" description="Lipoprotein LpqH">
    <location>
        <begin position="22"/>
        <end position="159"/>
    </location>
</feature>
<feature type="region of interest" description="Disordered" evidence="2">
    <location>
        <begin position="24"/>
        <end position="51"/>
    </location>
</feature>
<feature type="compositionally biased region" description="Low complexity" evidence="2">
    <location>
        <begin position="27"/>
        <end position="49"/>
    </location>
</feature>
<feature type="lipid moiety-binding region" description="N-palmitoyl cysteine" evidence="3">
    <location>
        <position position="22"/>
    </location>
</feature>
<feature type="lipid moiety-binding region" description="S-diacylglycerol cysteine" evidence="3">
    <location>
        <position position="22"/>
    </location>
</feature>
<dbReference type="EMBL" id="X15803">
    <property type="protein sequence ID" value="CAA33802.1"/>
    <property type="molecule type" value="Genomic_DNA"/>
</dbReference>
<dbReference type="EMBL" id="LT708304">
    <property type="protein sequence ID" value="SIU02418.1"/>
    <property type="molecule type" value="Genomic_DNA"/>
</dbReference>
<dbReference type="PIR" id="S11234">
    <property type="entry name" value="S11234"/>
</dbReference>
<dbReference type="RefSeq" id="NP_857426.1">
    <property type="nucleotide sequence ID" value="NC_002945.3"/>
</dbReference>
<dbReference type="RefSeq" id="WP_003420544.1">
    <property type="nucleotide sequence ID" value="NC_002945.4"/>
</dbReference>
<dbReference type="SMR" id="P0A5J1"/>
<dbReference type="GeneID" id="45427763"/>
<dbReference type="KEGG" id="mbo:BQ2027_MB3789"/>
<dbReference type="PATRIC" id="fig|233413.5.peg.4145"/>
<dbReference type="Proteomes" id="UP000001419">
    <property type="component" value="Chromosome"/>
</dbReference>
<dbReference type="GO" id="GO:0005886">
    <property type="term" value="C:plasma membrane"/>
    <property type="evidence" value="ECO:0007669"/>
    <property type="project" value="UniProtKB-SubCell"/>
</dbReference>
<dbReference type="InterPro" id="IPR008691">
    <property type="entry name" value="LpqH"/>
</dbReference>
<dbReference type="Pfam" id="PF05481">
    <property type="entry name" value="Myco_19_kDa"/>
    <property type="match status" value="1"/>
</dbReference>
<dbReference type="PROSITE" id="PS51257">
    <property type="entry name" value="PROKAR_LIPOPROTEIN"/>
    <property type="match status" value="1"/>
</dbReference>
<sequence length="159" mass="15147">MKRGLTVAVAGAAILVAGLSGCSSNKSTTGSGETTTAAGTTASPGAASGPKVVIDGKDQNVTGSVVCTTAAGNVNIAIGGAATGIAAVLTDGNPPEVKSVGLGNVNGVTLGYTSGTGQGNASATKDGSHYKITGTATGVDMANPMSPVNKSFEIEVTCS</sequence>
<name>LPQH_MYCBO</name>
<gene>
    <name type="primary">lpqH</name>
    <name type="ordered locus">BQ2027_MB3789</name>
</gene>